<reference key="1">
    <citation type="journal article" date="2009" name="Genome Res.">
        <title>Comparative genomics of protoploid Saccharomycetaceae.</title>
        <authorList>
            <consortium name="The Genolevures Consortium"/>
            <person name="Souciet J.-L."/>
            <person name="Dujon B."/>
            <person name="Gaillardin C."/>
            <person name="Johnston M."/>
            <person name="Baret P.V."/>
            <person name="Cliften P."/>
            <person name="Sherman D.J."/>
            <person name="Weissenbach J."/>
            <person name="Westhof E."/>
            <person name="Wincker P."/>
            <person name="Jubin C."/>
            <person name="Poulain J."/>
            <person name="Barbe V."/>
            <person name="Segurens B."/>
            <person name="Artiguenave F."/>
            <person name="Anthouard V."/>
            <person name="Vacherie B."/>
            <person name="Val M.-E."/>
            <person name="Fulton R.S."/>
            <person name="Minx P."/>
            <person name="Wilson R."/>
            <person name="Durrens P."/>
            <person name="Jean G."/>
            <person name="Marck C."/>
            <person name="Martin T."/>
            <person name="Nikolski M."/>
            <person name="Rolland T."/>
            <person name="Seret M.-L."/>
            <person name="Casaregola S."/>
            <person name="Despons L."/>
            <person name="Fairhead C."/>
            <person name="Fischer G."/>
            <person name="Lafontaine I."/>
            <person name="Leh V."/>
            <person name="Lemaire M."/>
            <person name="de Montigny J."/>
            <person name="Neuveglise C."/>
            <person name="Thierry A."/>
            <person name="Blanc-Lenfle I."/>
            <person name="Bleykasten C."/>
            <person name="Diffels J."/>
            <person name="Fritsch E."/>
            <person name="Frangeul L."/>
            <person name="Goeffon A."/>
            <person name="Jauniaux N."/>
            <person name="Kachouri-Lafond R."/>
            <person name="Payen C."/>
            <person name="Potier S."/>
            <person name="Pribylova L."/>
            <person name="Ozanne C."/>
            <person name="Richard G.-F."/>
            <person name="Sacerdot C."/>
            <person name="Straub M.-L."/>
            <person name="Talla E."/>
        </authorList>
    </citation>
    <scope>NUCLEOTIDE SEQUENCE [LARGE SCALE GENOMIC DNA]</scope>
    <source>
        <strain>ATCC 56472 / CBS 6340 / NRRL Y-8284</strain>
    </source>
</reference>
<feature type="chain" id="PRO_0000410811" description="Protein HRI1">
    <location>
        <begin position="1"/>
        <end position="261"/>
    </location>
</feature>
<protein>
    <recommendedName>
        <fullName>Protein HRI1</fullName>
    </recommendedName>
</protein>
<comment type="subcellular location">
    <subcellularLocation>
        <location evidence="1">Cytoplasm</location>
    </subcellularLocation>
    <subcellularLocation>
        <location evidence="1">Nucleus</location>
    </subcellularLocation>
</comment>
<comment type="similarity">
    <text evidence="2">Belongs to the HRI1 family.</text>
</comment>
<proteinExistence type="inferred from homology"/>
<sequence>MCSEHPLAVKWQSKIIAMVSLNKRCTFQVGENPADERTLTLSSASNGGYYISLRPFVEPKGSESELPYEWAFAGSPKSLEAKKVDELRDDINFNFDFDTNVHLNAENTHRGVVETHWKKWESGLVEERGQVFPFGPDKQAVSFFELWQPIDATRDEFVHISEKSVDQSAARSVVLALDDDNYRGLVITVGKWTQGILFKKAEHTAKGINFLRACESADGKITTLLKYGVDFDRFPSTFVGQKDAELQGAAGAFWKVVESNL</sequence>
<organism>
    <name type="scientific">Lachancea thermotolerans (strain ATCC 56472 / CBS 6340 / NRRL Y-8284)</name>
    <name type="common">Yeast</name>
    <name type="synonym">Kluyveromyces thermotolerans</name>
    <dbReference type="NCBI Taxonomy" id="559295"/>
    <lineage>
        <taxon>Eukaryota</taxon>
        <taxon>Fungi</taxon>
        <taxon>Dikarya</taxon>
        <taxon>Ascomycota</taxon>
        <taxon>Saccharomycotina</taxon>
        <taxon>Saccharomycetes</taxon>
        <taxon>Saccharomycetales</taxon>
        <taxon>Saccharomycetaceae</taxon>
        <taxon>Lachancea</taxon>
    </lineage>
</organism>
<accession>C5E2Q7</accession>
<keyword id="KW-0963">Cytoplasm</keyword>
<keyword id="KW-0539">Nucleus</keyword>
<keyword id="KW-1185">Reference proteome</keyword>
<name>HRI1_LACTC</name>
<evidence type="ECO:0000250" key="1"/>
<evidence type="ECO:0000305" key="2"/>
<gene>
    <name type="primary">HRI1</name>
    <name type="ordered locus">KLTH0H06930g</name>
</gene>
<dbReference type="EMBL" id="CU928180">
    <property type="protein sequence ID" value="CAR30318.1"/>
    <property type="molecule type" value="Genomic_DNA"/>
</dbReference>
<dbReference type="RefSeq" id="XP_002556180.1">
    <property type="nucleotide sequence ID" value="XM_002556134.1"/>
</dbReference>
<dbReference type="SMR" id="C5E2Q7"/>
<dbReference type="FunCoup" id="C5E2Q7">
    <property type="interactions" value="32"/>
</dbReference>
<dbReference type="STRING" id="559295.C5E2Q7"/>
<dbReference type="GeneID" id="8294497"/>
<dbReference type="KEGG" id="lth:KLTH0H06930g"/>
<dbReference type="eggNOG" id="ENOG502QTYD">
    <property type="taxonomic scope" value="Eukaryota"/>
</dbReference>
<dbReference type="HOGENOM" id="CLU_097607_0_0_1"/>
<dbReference type="InParanoid" id="C5E2Q7"/>
<dbReference type="OMA" id="GEVNTTW"/>
<dbReference type="OrthoDB" id="4045395at2759"/>
<dbReference type="Proteomes" id="UP000002036">
    <property type="component" value="Chromosome H"/>
</dbReference>
<dbReference type="GO" id="GO:0005737">
    <property type="term" value="C:cytoplasm"/>
    <property type="evidence" value="ECO:0007669"/>
    <property type="project" value="UniProtKB-SubCell"/>
</dbReference>
<dbReference type="GO" id="GO:0005634">
    <property type="term" value="C:nucleus"/>
    <property type="evidence" value="ECO:0007669"/>
    <property type="project" value="UniProtKB-SubCell"/>
</dbReference>
<dbReference type="CDD" id="cd11693">
    <property type="entry name" value="HRI1_C_like"/>
    <property type="match status" value="1"/>
</dbReference>
<dbReference type="CDD" id="cd11692">
    <property type="entry name" value="HRI1_N_like"/>
    <property type="match status" value="1"/>
</dbReference>
<dbReference type="Gene3D" id="2.40.128.310">
    <property type="entry name" value="Protein HRI1, C-terminal domain"/>
    <property type="match status" value="1"/>
</dbReference>
<dbReference type="Gene3D" id="2.40.128.320">
    <property type="entry name" value="Protein HRI1, N-terminal domain"/>
    <property type="match status" value="1"/>
</dbReference>
<dbReference type="InterPro" id="IPR031818">
    <property type="entry name" value="Hri1"/>
</dbReference>
<dbReference type="InterPro" id="IPR038744">
    <property type="entry name" value="Hri1_N"/>
</dbReference>
<dbReference type="InterPro" id="IPR043047">
    <property type="entry name" value="Hri1_N_sf"/>
</dbReference>
<dbReference type="Pfam" id="PF16815">
    <property type="entry name" value="HRI1"/>
    <property type="match status" value="1"/>
</dbReference>